<dbReference type="EC" id="6.1.1.4" evidence="1"/>
<dbReference type="EMBL" id="BX640447">
    <property type="protein sequence ID" value="CAE33869.1"/>
    <property type="molecule type" value="Genomic_DNA"/>
</dbReference>
<dbReference type="RefSeq" id="WP_010926800.1">
    <property type="nucleotide sequence ID" value="NC_002927.3"/>
</dbReference>
<dbReference type="SMR" id="Q7WH33"/>
<dbReference type="KEGG" id="bbr:BB3377"/>
<dbReference type="eggNOG" id="COG0495">
    <property type="taxonomic scope" value="Bacteria"/>
</dbReference>
<dbReference type="HOGENOM" id="CLU_004427_0_0_4"/>
<dbReference type="Proteomes" id="UP000001027">
    <property type="component" value="Chromosome"/>
</dbReference>
<dbReference type="GO" id="GO:0005829">
    <property type="term" value="C:cytosol"/>
    <property type="evidence" value="ECO:0007669"/>
    <property type="project" value="TreeGrafter"/>
</dbReference>
<dbReference type="GO" id="GO:0002161">
    <property type="term" value="F:aminoacyl-tRNA deacylase activity"/>
    <property type="evidence" value="ECO:0007669"/>
    <property type="project" value="InterPro"/>
</dbReference>
<dbReference type="GO" id="GO:0005524">
    <property type="term" value="F:ATP binding"/>
    <property type="evidence" value="ECO:0007669"/>
    <property type="project" value="UniProtKB-UniRule"/>
</dbReference>
<dbReference type="GO" id="GO:0004823">
    <property type="term" value="F:leucine-tRNA ligase activity"/>
    <property type="evidence" value="ECO:0007669"/>
    <property type="project" value="UniProtKB-UniRule"/>
</dbReference>
<dbReference type="GO" id="GO:0006429">
    <property type="term" value="P:leucyl-tRNA aminoacylation"/>
    <property type="evidence" value="ECO:0007669"/>
    <property type="project" value="UniProtKB-UniRule"/>
</dbReference>
<dbReference type="CDD" id="cd07958">
    <property type="entry name" value="Anticodon_Ia_Leu_BEm"/>
    <property type="match status" value="1"/>
</dbReference>
<dbReference type="CDD" id="cd00812">
    <property type="entry name" value="LeuRS_core"/>
    <property type="match status" value="1"/>
</dbReference>
<dbReference type="FunFam" id="1.10.730.10:FF:000002">
    <property type="entry name" value="Leucine--tRNA ligase"/>
    <property type="match status" value="1"/>
</dbReference>
<dbReference type="FunFam" id="3.10.20.590:FF:000001">
    <property type="entry name" value="Leucine--tRNA ligase"/>
    <property type="match status" value="1"/>
</dbReference>
<dbReference type="FunFam" id="3.40.50.620:FF:000003">
    <property type="entry name" value="Leucine--tRNA ligase"/>
    <property type="match status" value="1"/>
</dbReference>
<dbReference type="FunFam" id="3.40.50.620:FF:000056">
    <property type="entry name" value="Leucine--tRNA ligase"/>
    <property type="match status" value="1"/>
</dbReference>
<dbReference type="FunFam" id="3.90.740.10:FF:000012">
    <property type="entry name" value="Leucine--tRNA ligase"/>
    <property type="match status" value="1"/>
</dbReference>
<dbReference type="Gene3D" id="2.20.28.290">
    <property type="match status" value="1"/>
</dbReference>
<dbReference type="Gene3D" id="3.10.20.590">
    <property type="match status" value="1"/>
</dbReference>
<dbReference type="Gene3D" id="3.40.50.620">
    <property type="entry name" value="HUPs"/>
    <property type="match status" value="2"/>
</dbReference>
<dbReference type="Gene3D" id="1.10.730.10">
    <property type="entry name" value="Isoleucyl-tRNA Synthetase, Domain 1"/>
    <property type="match status" value="1"/>
</dbReference>
<dbReference type="HAMAP" id="MF_00049_B">
    <property type="entry name" value="Leu_tRNA_synth_B"/>
    <property type="match status" value="1"/>
</dbReference>
<dbReference type="InterPro" id="IPR001412">
    <property type="entry name" value="aa-tRNA-synth_I_CS"/>
</dbReference>
<dbReference type="InterPro" id="IPR002300">
    <property type="entry name" value="aa-tRNA-synth_Ia"/>
</dbReference>
<dbReference type="InterPro" id="IPR002302">
    <property type="entry name" value="Leu-tRNA-ligase"/>
</dbReference>
<dbReference type="InterPro" id="IPR025709">
    <property type="entry name" value="Leu_tRNA-synth_edit"/>
</dbReference>
<dbReference type="InterPro" id="IPR013155">
    <property type="entry name" value="M/V/L/I-tRNA-synth_anticd-bd"/>
</dbReference>
<dbReference type="InterPro" id="IPR015413">
    <property type="entry name" value="Methionyl/Leucyl_tRNA_Synth"/>
</dbReference>
<dbReference type="InterPro" id="IPR014729">
    <property type="entry name" value="Rossmann-like_a/b/a_fold"/>
</dbReference>
<dbReference type="InterPro" id="IPR009080">
    <property type="entry name" value="tRNAsynth_Ia_anticodon-bd"/>
</dbReference>
<dbReference type="InterPro" id="IPR009008">
    <property type="entry name" value="Val/Leu/Ile-tRNA-synth_edit"/>
</dbReference>
<dbReference type="NCBIfam" id="TIGR00396">
    <property type="entry name" value="leuS_bact"/>
    <property type="match status" value="1"/>
</dbReference>
<dbReference type="PANTHER" id="PTHR43740:SF2">
    <property type="entry name" value="LEUCINE--TRNA LIGASE, MITOCHONDRIAL"/>
    <property type="match status" value="1"/>
</dbReference>
<dbReference type="PANTHER" id="PTHR43740">
    <property type="entry name" value="LEUCYL-TRNA SYNTHETASE"/>
    <property type="match status" value="1"/>
</dbReference>
<dbReference type="Pfam" id="PF08264">
    <property type="entry name" value="Anticodon_1"/>
    <property type="match status" value="1"/>
</dbReference>
<dbReference type="Pfam" id="PF00133">
    <property type="entry name" value="tRNA-synt_1"/>
    <property type="match status" value="1"/>
</dbReference>
<dbReference type="Pfam" id="PF13603">
    <property type="entry name" value="tRNA-synt_1_2"/>
    <property type="match status" value="1"/>
</dbReference>
<dbReference type="Pfam" id="PF09334">
    <property type="entry name" value="tRNA-synt_1g"/>
    <property type="match status" value="1"/>
</dbReference>
<dbReference type="PRINTS" id="PR00985">
    <property type="entry name" value="TRNASYNTHLEU"/>
</dbReference>
<dbReference type="SUPFAM" id="SSF47323">
    <property type="entry name" value="Anticodon-binding domain of a subclass of class I aminoacyl-tRNA synthetases"/>
    <property type="match status" value="1"/>
</dbReference>
<dbReference type="SUPFAM" id="SSF52374">
    <property type="entry name" value="Nucleotidylyl transferase"/>
    <property type="match status" value="1"/>
</dbReference>
<dbReference type="SUPFAM" id="SSF50677">
    <property type="entry name" value="ValRS/IleRS/LeuRS editing domain"/>
    <property type="match status" value="1"/>
</dbReference>
<dbReference type="PROSITE" id="PS00178">
    <property type="entry name" value="AA_TRNA_LIGASE_I"/>
    <property type="match status" value="1"/>
</dbReference>
<gene>
    <name evidence="1" type="primary">leuS</name>
    <name type="ordered locus">BB3377</name>
</gene>
<name>SYL_BORBR</name>
<accession>Q7WH33</accession>
<evidence type="ECO:0000255" key="1">
    <source>
        <dbReference type="HAMAP-Rule" id="MF_00049"/>
    </source>
</evidence>
<comment type="catalytic activity">
    <reaction evidence="1">
        <text>tRNA(Leu) + L-leucine + ATP = L-leucyl-tRNA(Leu) + AMP + diphosphate</text>
        <dbReference type="Rhea" id="RHEA:11688"/>
        <dbReference type="Rhea" id="RHEA-COMP:9613"/>
        <dbReference type="Rhea" id="RHEA-COMP:9622"/>
        <dbReference type="ChEBI" id="CHEBI:30616"/>
        <dbReference type="ChEBI" id="CHEBI:33019"/>
        <dbReference type="ChEBI" id="CHEBI:57427"/>
        <dbReference type="ChEBI" id="CHEBI:78442"/>
        <dbReference type="ChEBI" id="CHEBI:78494"/>
        <dbReference type="ChEBI" id="CHEBI:456215"/>
        <dbReference type="EC" id="6.1.1.4"/>
    </reaction>
</comment>
<comment type="subcellular location">
    <subcellularLocation>
        <location evidence="1">Cytoplasm</location>
    </subcellularLocation>
</comment>
<comment type="similarity">
    <text evidence="1">Belongs to the class-I aminoacyl-tRNA synthetase family.</text>
</comment>
<reference key="1">
    <citation type="journal article" date="2003" name="Nat. Genet.">
        <title>Comparative analysis of the genome sequences of Bordetella pertussis, Bordetella parapertussis and Bordetella bronchiseptica.</title>
        <authorList>
            <person name="Parkhill J."/>
            <person name="Sebaihia M."/>
            <person name="Preston A."/>
            <person name="Murphy L.D."/>
            <person name="Thomson N.R."/>
            <person name="Harris D.E."/>
            <person name="Holden M.T.G."/>
            <person name="Churcher C.M."/>
            <person name="Bentley S.D."/>
            <person name="Mungall K.L."/>
            <person name="Cerdeno-Tarraga A.-M."/>
            <person name="Temple L."/>
            <person name="James K.D."/>
            <person name="Harris B."/>
            <person name="Quail M.A."/>
            <person name="Achtman M."/>
            <person name="Atkin R."/>
            <person name="Baker S."/>
            <person name="Basham D."/>
            <person name="Bason N."/>
            <person name="Cherevach I."/>
            <person name="Chillingworth T."/>
            <person name="Collins M."/>
            <person name="Cronin A."/>
            <person name="Davis P."/>
            <person name="Doggett J."/>
            <person name="Feltwell T."/>
            <person name="Goble A."/>
            <person name="Hamlin N."/>
            <person name="Hauser H."/>
            <person name="Holroyd S."/>
            <person name="Jagels K."/>
            <person name="Leather S."/>
            <person name="Moule S."/>
            <person name="Norberczak H."/>
            <person name="O'Neil S."/>
            <person name="Ormond D."/>
            <person name="Price C."/>
            <person name="Rabbinowitsch E."/>
            <person name="Rutter S."/>
            <person name="Sanders M."/>
            <person name="Saunders D."/>
            <person name="Seeger K."/>
            <person name="Sharp S."/>
            <person name="Simmonds M."/>
            <person name="Skelton J."/>
            <person name="Squares R."/>
            <person name="Squares S."/>
            <person name="Stevens K."/>
            <person name="Unwin L."/>
            <person name="Whitehead S."/>
            <person name="Barrell B.G."/>
            <person name="Maskell D.J."/>
        </authorList>
    </citation>
    <scope>NUCLEOTIDE SEQUENCE [LARGE SCALE GENOMIC DNA]</scope>
    <source>
        <strain>ATCC BAA-588 / NCTC 13252 / RB50</strain>
    </source>
</reference>
<sequence length="885" mass="99008">MQERYQPNSVEAAAQQTWQARDAYLVHEHAKNPDGSEKPKFYACSMLPYPSGKLHMGHVRNYTINDMMARQLRMRGYNVLMPMGWDAFGMPAENAAIKSKVPPAKWTYDNIAYMKKQMKAMGLAIDWSREMCACDPKYYKWNQWLFLKMLEKGIAYRKTQVVNWDPVDQTVLANEQVIDGRGWRSGAPVEKREIPGYYLRITDYAEELLDQVSTNLPGWPERVRLMQENWIGKSEGLRFAFPHRIAGADGKLIQDGKLYVFTTRADTIMGVTFCAVAPEHPLATHAAQSNPALAAFVEQCKLGGTTEAEMATREKEGMPTGLTVTHPLTGAEIDVWVGNYVLMTYGDGAVMGVPAHDERDFAFARKYGLPIRQVVALEGKTYSTDAWQEWYGDKQAGRTVNSGKYDGLAYQAAVDTIAADLAAQGLGEKQTTWRLRDWGISRQRYWGTPIPIIHCADCGPVPVPEQDLPVVLPDDLIPDGSGNPLAKNEAFLSCSCPRCGKPARRETDTMDTFVDSSWYFMRYTSPDNDQAMVDARNDYWMPMDQYIGGIEHAVLHLLYARFWTKVMRDLGLLNFDEPFTKLLCQGMVLNHIYSRKTPQGGIEYFWPEEVDNVYDAKGAIVGAKLQRDGSEVNYGGVGTMSKSKNNGVDPQSLIDTLGADTARLFVMFASPPEQTLEWSDSGVEGANRFLRRLWALGYAQREAVGRGLATGADWAQAPAPVKELRREVYGLLKQADYDYQRIQYNTVVSACMKMLNAIDDAPLPEGPAADAARAETLGLLLRVLYPVVPHITWHLWQDLGYAEHLGDLLDAPWPHVDEAALVADEIELMLQVNGKLRGSIRVAAKAPKEDIERIAAAQEEVARFLEGRPPKRVIVVPGKLVNVVG</sequence>
<proteinExistence type="inferred from homology"/>
<keyword id="KW-0030">Aminoacyl-tRNA synthetase</keyword>
<keyword id="KW-0067">ATP-binding</keyword>
<keyword id="KW-0963">Cytoplasm</keyword>
<keyword id="KW-0436">Ligase</keyword>
<keyword id="KW-0547">Nucleotide-binding</keyword>
<keyword id="KW-0648">Protein biosynthesis</keyword>
<protein>
    <recommendedName>
        <fullName evidence="1">Leucine--tRNA ligase</fullName>
        <ecNumber evidence="1">6.1.1.4</ecNumber>
    </recommendedName>
    <alternativeName>
        <fullName evidence="1">Leucyl-tRNA synthetase</fullName>
        <shortName evidence="1">LeuRS</shortName>
    </alternativeName>
</protein>
<organism>
    <name type="scientific">Bordetella bronchiseptica (strain ATCC BAA-588 / NCTC 13252 / RB50)</name>
    <name type="common">Alcaligenes bronchisepticus</name>
    <dbReference type="NCBI Taxonomy" id="257310"/>
    <lineage>
        <taxon>Bacteria</taxon>
        <taxon>Pseudomonadati</taxon>
        <taxon>Pseudomonadota</taxon>
        <taxon>Betaproteobacteria</taxon>
        <taxon>Burkholderiales</taxon>
        <taxon>Alcaligenaceae</taxon>
        <taxon>Bordetella</taxon>
    </lineage>
</organism>
<feature type="chain" id="PRO_0000151979" description="Leucine--tRNA ligase">
    <location>
        <begin position="1"/>
        <end position="885"/>
    </location>
</feature>
<feature type="short sequence motif" description="'HIGH' region">
    <location>
        <begin position="48"/>
        <end position="58"/>
    </location>
</feature>
<feature type="short sequence motif" description="'KMSKS' region">
    <location>
        <begin position="639"/>
        <end position="643"/>
    </location>
</feature>
<feature type="binding site" evidence="1">
    <location>
        <position position="642"/>
    </location>
    <ligand>
        <name>ATP</name>
        <dbReference type="ChEBI" id="CHEBI:30616"/>
    </ligand>
</feature>